<reference key="1">
    <citation type="journal article" date="1998" name="Proc. Natl. Acad. Sci. U.S.A.">
        <title>Isolation of a hepadnavirus from the woolly monkey, a New World primate.</title>
        <authorList>
            <person name="Lanford R.E."/>
            <person name="Chavez D."/>
            <person name="Brasky K.M."/>
            <person name="Burns R.B. III"/>
            <person name="Rico-Hesse R."/>
        </authorList>
    </citation>
    <scope>NUCLEOTIDE SEQUENCE [GENOMIC DNA]</scope>
</reference>
<dbReference type="EMBL" id="AF046996">
    <property type="protein sequence ID" value="AAC16907.1"/>
    <property type="molecule type" value="Genomic_DNA"/>
</dbReference>
<dbReference type="Proteomes" id="UP000008599">
    <property type="component" value="Segment"/>
</dbReference>
<dbReference type="GO" id="GO:0033650">
    <property type="term" value="C:host cell mitochondrion"/>
    <property type="evidence" value="ECO:0007669"/>
    <property type="project" value="UniProtKB-SubCell"/>
</dbReference>
<dbReference type="GO" id="GO:0042025">
    <property type="term" value="C:host cell nucleus"/>
    <property type="evidence" value="ECO:0007669"/>
    <property type="project" value="UniProtKB-SubCell"/>
</dbReference>
<dbReference type="GO" id="GO:0006351">
    <property type="term" value="P:DNA-templated transcription"/>
    <property type="evidence" value="ECO:0007669"/>
    <property type="project" value="UniProtKB-UniRule"/>
</dbReference>
<dbReference type="GO" id="GO:0085033">
    <property type="term" value="P:symbiont-mediated activation of host NF-kappaB cascade"/>
    <property type="evidence" value="ECO:0007669"/>
    <property type="project" value="UniProtKB-UniRule"/>
</dbReference>
<dbReference type="GO" id="GO:0039592">
    <property type="term" value="P:symbiont-mediated arrest of host cell cycle during G2/M transition"/>
    <property type="evidence" value="ECO:0007669"/>
    <property type="project" value="UniProtKB-UniRule"/>
</dbReference>
<dbReference type="GO" id="GO:0019079">
    <property type="term" value="P:viral genome replication"/>
    <property type="evidence" value="ECO:0007669"/>
    <property type="project" value="UniProtKB-UniRule"/>
</dbReference>
<dbReference type="HAMAP" id="MF_04074">
    <property type="entry name" value="HBV_X"/>
    <property type="match status" value="1"/>
</dbReference>
<dbReference type="InterPro" id="IPR000236">
    <property type="entry name" value="Transactivation_prot_X"/>
</dbReference>
<dbReference type="Pfam" id="PF00739">
    <property type="entry name" value="X"/>
    <property type="match status" value="1"/>
</dbReference>
<evidence type="ECO:0000255" key="1">
    <source>
        <dbReference type="HAMAP-Rule" id="MF_04074"/>
    </source>
</evidence>
<organismHost>
    <name type="scientific">Lagothrix lagotricha</name>
    <name type="common">Brown woolly monkey</name>
    <name type="synonym">Humboldt's woolly monkey</name>
    <dbReference type="NCBI Taxonomy" id="9519"/>
</organismHost>
<feature type="chain" id="PRO_0000322114" description="Protein X">
    <location>
        <begin position="1"/>
        <end position="152"/>
    </location>
</feature>
<feature type="region of interest" description="Mitochondrial targeting sequence" evidence="1">
    <location>
        <begin position="68"/>
        <end position="115"/>
    </location>
</feature>
<organism>
    <name type="scientific">Woolly monkey hepatitis B virus (isolate Louisville)</name>
    <name type="common">WMHBV</name>
    <dbReference type="NCBI Taxonomy" id="490134"/>
    <lineage>
        <taxon>Viruses</taxon>
        <taxon>Riboviria</taxon>
        <taxon>Pararnavirae</taxon>
        <taxon>Artverviricota</taxon>
        <taxon>Revtraviricetes</taxon>
        <taxon>Blubervirales</taxon>
        <taxon>Hepadnaviridae</taxon>
        <taxon>Orthohepadnavirus</taxon>
        <taxon>Woolly monkey hepatitis B virus</taxon>
    </lineage>
</organism>
<keyword id="KW-1074">Activation of host NF-kappa-B by virus</keyword>
<keyword id="KW-0010">Activator</keyword>
<keyword id="KW-0053">Apoptosis</keyword>
<keyword id="KW-1035">Host cytoplasm</keyword>
<keyword id="KW-1079">Host G2/M cell cycle arrest by virus</keyword>
<keyword id="KW-1045">Host mitochondrion</keyword>
<keyword id="KW-1048">Host nucleus</keyword>
<keyword id="KW-0945">Host-virus interaction</keyword>
<keyword id="KW-1121">Modulation of host cell cycle by virus</keyword>
<keyword id="KW-0804">Transcription</keyword>
<keyword id="KW-0805">Transcription regulation</keyword>
<comment type="function">
    <text evidence="1">Multifunctional protein that plays a role in silencing host antiviral defenses and promoting viral transcription. Does not seem to be essential for HBV infection. May be directly involved in development of cirrhosis and liver cancer (hepatocellular carcinoma). Most of cytosolic activities involve modulation of cytosolic calcium. The effect on apoptosis is controversial depending on the cell types in which the studies have been conducted. May induce apoptosis by localizing in mitochondria and causing loss of mitochondrial membrane potential. May also modulate apoptosis by binding host CFLAR, a key regulator of the death-inducing signaling complex (DISC). Promotes viral transcription by using the host E3 ubiquitin ligase DDB1 to target the SMC5-SMC6 complex to proteasomal degradation. This host complex would otherwise bind to viral episomal DNA, and prevents its transcription. Moderately stimulates transcription of many different viral and cellular transcription elements. Promoters and enhancers stimulated by HBx contain DNA binding sites for NF-kappa-B, AP-1, AP-2, c-EBP, ATF/CREB, or the calcium-activated factor NF-AT.</text>
</comment>
<comment type="subunit">
    <text evidence="1">May form homodimer. May interact with host CEBPA, CFLAR, CREB1, DDB1, E4F1, HBXIP, HSPD1/HSP60, NFKBIA, POLR2E and SMAD4. Interacts with host SMC5-SMC6 complex and induces its degradation. Interacts with host TRPC4AP; leading to prevent ubiquitination of TRPC4AP. Interacts with host PLSCR1; this interaction promotes ubiquitination and degradation of HBx and impairs HBx-mediated cell proliferation.</text>
</comment>
<comment type="subcellular location">
    <subcellularLocation>
        <location evidence="1">Host cytoplasm</location>
    </subcellularLocation>
    <subcellularLocation>
        <location evidence="1">Host nucleus</location>
    </subcellularLocation>
    <subcellularLocation>
        <location evidence="1">Host mitochondrion</location>
    </subcellularLocation>
    <text evidence="1">Mainly cytoplasmic as only a fraction is detected in the nucleus. In cytoplasm, a minor fraction associates with mitochondria or proteasomes.</text>
</comment>
<comment type="PTM">
    <text evidence="1">A fraction may be phosphorylated in insect cells and HepG2 cells, a human hepatoblastoma cell line. Phosphorylated in vitro by host protein kinase C or mitogen-activated protein kinase. N-acetylated in insect cells.</text>
</comment>
<comment type="similarity">
    <text evidence="1">Belongs to the orthohepadnavirus protein X family.</text>
</comment>
<sequence>MAARLCCYLDPERDVLCLRPLQAEPSGRPFSGLSRPAETAAAAAVPAFHGAHLSLRGLPSCAFSSAGPCALRFTSATWRCMETPMNSVTCLRKRTLGLRTAPPTVMEQYIKDCLFEQWEEQGEEPRLKVFVLGGCRHKLVGTASPCIFFTSA</sequence>
<accession>O71302</accession>
<gene>
    <name evidence="1" type="primary">X</name>
</gene>
<proteinExistence type="inferred from homology"/>
<name>X_WMHBV</name>
<protein>
    <recommendedName>
        <fullName evidence="1">Protein X</fullName>
    </recommendedName>
    <alternativeName>
        <fullName evidence="1">HBx</fullName>
    </alternativeName>
    <alternativeName>
        <fullName evidence="1">Peptide X</fullName>
    </alternativeName>
    <alternativeName>
        <fullName evidence="1">pX</fullName>
    </alternativeName>
</protein>